<proteinExistence type="evidence at protein level"/>
<evidence type="ECO:0000250" key="1"/>
<evidence type="ECO:0000250" key="2">
    <source>
        <dbReference type="UniProtKB" id="Q8H8C7"/>
    </source>
</evidence>
<evidence type="ECO:0000255" key="3"/>
<evidence type="ECO:0000255" key="4">
    <source>
        <dbReference type="PROSITE-ProRule" id="PRU01118"/>
    </source>
</evidence>
<evidence type="ECO:0000269" key="5">
    <source>
    </source>
</evidence>
<evidence type="ECO:0000305" key="6"/>
<gene>
    <name type="primary">LYM2</name>
    <name type="ordered locus">At2g17120</name>
    <name type="ORF">F6P23.25</name>
</gene>
<name>LYM2_ARATH</name>
<sequence>METSCFTLLGLLVSLSFFLTLSAQMTGNFNCSGSTSTCQSLVGYSSKNATTLRNIQTLFAVKNLRSILGANNLPLNTSRDQRVNPNQVVRVPIHCSCSNGTGVSNRDIEYTIKKDDILSFVATEIFGGLVTYEKISEVNKIPDPNKIEIGQKFWIPLPCSCDKLNGEDVVHYAHVVKLGSSLGEIAAQFGTDNTTLAQLNGIIGDSQLLADKPLDVPLKACSSSVRKDSLDAPLLLSNNSYVFTANNCVKCTCDALKNWTLSCQSSSEIKPSNWQTCPPFSQCDGALLNASCRQPRDCVYAGYSNQTIFTTASPACPDSAGPDNYASTLSSSFNFVIVLIQCALLCLCLL</sequence>
<dbReference type="EMBL" id="CP002685">
    <property type="protein sequence ID" value="AEC06587.1"/>
    <property type="molecule type" value="Genomic_DNA"/>
</dbReference>
<dbReference type="EMBL" id="AF428464">
    <property type="protein sequence ID" value="AAL16233.1"/>
    <property type="molecule type" value="mRNA"/>
</dbReference>
<dbReference type="EMBL" id="AY056221">
    <property type="protein sequence ID" value="AAL07070.1"/>
    <property type="molecule type" value="mRNA"/>
</dbReference>
<dbReference type="EMBL" id="AY125560">
    <property type="protein sequence ID" value="AAM78070.1"/>
    <property type="molecule type" value="mRNA"/>
</dbReference>
<dbReference type="EMBL" id="AY088373">
    <property type="protein sequence ID" value="AAM65912.1"/>
    <property type="molecule type" value="mRNA"/>
</dbReference>
<dbReference type="PIR" id="C84548">
    <property type="entry name" value="C84548"/>
</dbReference>
<dbReference type="RefSeq" id="NP_565406.1">
    <property type="nucleotide sequence ID" value="NM_127266.4"/>
</dbReference>
<dbReference type="SMR" id="O23006"/>
<dbReference type="FunCoup" id="O23006">
    <property type="interactions" value="738"/>
</dbReference>
<dbReference type="STRING" id="3702.O23006"/>
<dbReference type="GlyCosmos" id="O23006">
    <property type="glycosylation" value="9 sites, No reported glycans"/>
</dbReference>
<dbReference type="GlyGen" id="O23006">
    <property type="glycosylation" value="9 sites"/>
</dbReference>
<dbReference type="iPTMnet" id="O23006"/>
<dbReference type="PaxDb" id="3702-AT2G17120.1"/>
<dbReference type="ProteomicsDB" id="239030"/>
<dbReference type="EnsemblPlants" id="AT2G17120.1">
    <property type="protein sequence ID" value="AT2G17120.1"/>
    <property type="gene ID" value="AT2G17120"/>
</dbReference>
<dbReference type="GeneID" id="816217"/>
<dbReference type="Gramene" id="AT2G17120.1">
    <property type="protein sequence ID" value="AT2G17120.1"/>
    <property type="gene ID" value="AT2G17120"/>
</dbReference>
<dbReference type="KEGG" id="ath:AT2G17120"/>
<dbReference type="Araport" id="AT2G17120"/>
<dbReference type="TAIR" id="AT2G17120">
    <property type="gene designation" value="LYP1"/>
</dbReference>
<dbReference type="eggNOG" id="ENOG502QQ9K">
    <property type="taxonomic scope" value="Eukaryota"/>
</dbReference>
<dbReference type="HOGENOM" id="CLU_047073_0_0_1"/>
<dbReference type="InParanoid" id="O23006"/>
<dbReference type="OMA" id="NVCNAGM"/>
<dbReference type="OrthoDB" id="2107166at2759"/>
<dbReference type="PhylomeDB" id="O23006"/>
<dbReference type="PRO" id="PR:O23006"/>
<dbReference type="Proteomes" id="UP000006548">
    <property type="component" value="Chromosome 2"/>
</dbReference>
<dbReference type="ExpressionAtlas" id="O23006">
    <property type="expression patterns" value="baseline and differential"/>
</dbReference>
<dbReference type="GO" id="GO:0005739">
    <property type="term" value="C:mitochondrion"/>
    <property type="evidence" value="ECO:0007005"/>
    <property type="project" value="TAIR"/>
</dbReference>
<dbReference type="GO" id="GO:0005886">
    <property type="term" value="C:plasma membrane"/>
    <property type="evidence" value="ECO:0007005"/>
    <property type="project" value="TAIR"/>
</dbReference>
<dbReference type="GO" id="GO:0009506">
    <property type="term" value="C:plasmodesma"/>
    <property type="evidence" value="ECO:0007005"/>
    <property type="project" value="TAIR"/>
</dbReference>
<dbReference type="GO" id="GO:0098552">
    <property type="term" value="C:side of membrane"/>
    <property type="evidence" value="ECO:0007669"/>
    <property type="project" value="UniProtKB-KW"/>
</dbReference>
<dbReference type="GO" id="GO:0008061">
    <property type="term" value="F:chitin binding"/>
    <property type="evidence" value="ECO:0000314"/>
    <property type="project" value="TAIR"/>
</dbReference>
<dbReference type="GO" id="GO:0006952">
    <property type="term" value="P:defense response"/>
    <property type="evidence" value="ECO:0007669"/>
    <property type="project" value="UniProtKB-KW"/>
</dbReference>
<dbReference type="CDD" id="cd00118">
    <property type="entry name" value="LysM"/>
    <property type="match status" value="1"/>
</dbReference>
<dbReference type="Gene3D" id="3.10.350.10">
    <property type="entry name" value="LysM domain"/>
    <property type="match status" value="2"/>
</dbReference>
<dbReference type="InterPro" id="IPR018392">
    <property type="entry name" value="LysM_dom"/>
</dbReference>
<dbReference type="InterPro" id="IPR036779">
    <property type="entry name" value="LysM_dom_sf"/>
</dbReference>
<dbReference type="PANTHER" id="PTHR33734">
    <property type="entry name" value="LYSM DOMAIN-CONTAINING GPI-ANCHORED PROTEIN 2"/>
    <property type="match status" value="1"/>
</dbReference>
<dbReference type="PANTHER" id="PTHR33734:SF11">
    <property type="entry name" value="LYSM DOMAIN-CONTAINING GPI-ANCHORED PROTEIN 2"/>
    <property type="match status" value="1"/>
</dbReference>
<dbReference type="Pfam" id="PF01476">
    <property type="entry name" value="LysM"/>
    <property type="match status" value="2"/>
</dbReference>
<dbReference type="SMART" id="SM00257">
    <property type="entry name" value="LysM"/>
    <property type="match status" value="2"/>
</dbReference>
<dbReference type="PROSITE" id="PS51782">
    <property type="entry name" value="LYSM"/>
    <property type="match status" value="2"/>
</dbReference>
<accession>O23006</accession>
<accession>Q8L9K9</accession>
<reference key="1">
    <citation type="journal article" date="1999" name="Nature">
        <title>Sequence and analysis of chromosome 2 of the plant Arabidopsis thaliana.</title>
        <authorList>
            <person name="Lin X."/>
            <person name="Kaul S."/>
            <person name="Rounsley S.D."/>
            <person name="Shea T.P."/>
            <person name="Benito M.-I."/>
            <person name="Town C.D."/>
            <person name="Fujii C.Y."/>
            <person name="Mason T.M."/>
            <person name="Bowman C.L."/>
            <person name="Barnstead M.E."/>
            <person name="Feldblyum T.V."/>
            <person name="Buell C.R."/>
            <person name="Ketchum K.A."/>
            <person name="Lee J.J."/>
            <person name="Ronning C.M."/>
            <person name="Koo H.L."/>
            <person name="Moffat K.S."/>
            <person name="Cronin L.A."/>
            <person name="Shen M."/>
            <person name="Pai G."/>
            <person name="Van Aken S."/>
            <person name="Umayam L."/>
            <person name="Tallon L.J."/>
            <person name="Gill J.E."/>
            <person name="Adams M.D."/>
            <person name="Carrera A.J."/>
            <person name="Creasy T.H."/>
            <person name="Goodman H.M."/>
            <person name="Somerville C.R."/>
            <person name="Copenhaver G.P."/>
            <person name="Preuss D."/>
            <person name="Nierman W.C."/>
            <person name="White O."/>
            <person name="Eisen J.A."/>
            <person name="Salzberg S.L."/>
            <person name="Fraser C.M."/>
            <person name="Venter J.C."/>
        </authorList>
    </citation>
    <scope>NUCLEOTIDE SEQUENCE [LARGE SCALE GENOMIC DNA]</scope>
    <source>
        <strain>cv. Columbia</strain>
    </source>
</reference>
<reference key="2">
    <citation type="journal article" date="2017" name="Plant J.">
        <title>Araport11: a complete reannotation of the Arabidopsis thaliana reference genome.</title>
        <authorList>
            <person name="Cheng C.Y."/>
            <person name="Krishnakumar V."/>
            <person name="Chan A.P."/>
            <person name="Thibaud-Nissen F."/>
            <person name="Schobel S."/>
            <person name="Town C.D."/>
        </authorList>
    </citation>
    <scope>GENOME REANNOTATION</scope>
    <source>
        <strain>cv. Columbia</strain>
    </source>
</reference>
<reference key="3">
    <citation type="journal article" date="2003" name="Science">
        <title>Empirical analysis of transcriptional activity in the Arabidopsis genome.</title>
        <authorList>
            <person name="Yamada K."/>
            <person name="Lim J."/>
            <person name="Dale J.M."/>
            <person name="Chen H."/>
            <person name="Shinn P."/>
            <person name="Palm C.J."/>
            <person name="Southwick A.M."/>
            <person name="Wu H.C."/>
            <person name="Kim C.J."/>
            <person name="Nguyen M."/>
            <person name="Pham P.K."/>
            <person name="Cheuk R.F."/>
            <person name="Karlin-Newmann G."/>
            <person name="Liu S.X."/>
            <person name="Lam B."/>
            <person name="Sakano H."/>
            <person name="Wu T."/>
            <person name="Yu G."/>
            <person name="Miranda M."/>
            <person name="Quach H.L."/>
            <person name="Tripp M."/>
            <person name="Chang C.H."/>
            <person name="Lee J.M."/>
            <person name="Toriumi M.J."/>
            <person name="Chan M.M."/>
            <person name="Tang C.C."/>
            <person name="Onodera C.S."/>
            <person name="Deng J.M."/>
            <person name="Akiyama K."/>
            <person name="Ansari Y."/>
            <person name="Arakawa T."/>
            <person name="Banh J."/>
            <person name="Banno F."/>
            <person name="Bowser L."/>
            <person name="Brooks S.Y."/>
            <person name="Carninci P."/>
            <person name="Chao Q."/>
            <person name="Choy N."/>
            <person name="Enju A."/>
            <person name="Goldsmith A.D."/>
            <person name="Gurjal M."/>
            <person name="Hansen N.F."/>
            <person name="Hayashizaki Y."/>
            <person name="Johnson-Hopson C."/>
            <person name="Hsuan V.W."/>
            <person name="Iida K."/>
            <person name="Karnes M."/>
            <person name="Khan S."/>
            <person name="Koesema E."/>
            <person name="Ishida J."/>
            <person name="Jiang P.X."/>
            <person name="Jones T."/>
            <person name="Kawai J."/>
            <person name="Kamiya A."/>
            <person name="Meyers C."/>
            <person name="Nakajima M."/>
            <person name="Narusaka M."/>
            <person name="Seki M."/>
            <person name="Sakurai T."/>
            <person name="Satou M."/>
            <person name="Tamse R."/>
            <person name="Vaysberg M."/>
            <person name="Wallender E.K."/>
            <person name="Wong C."/>
            <person name="Yamamura Y."/>
            <person name="Yuan S."/>
            <person name="Shinozaki K."/>
            <person name="Davis R.W."/>
            <person name="Theologis A."/>
            <person name="Ecker J.R."/>
        </authorList>
    </citation>
    <scope>NUCLEOTIDE SEQUENCE [LARGE SCALE MRNA]</scope>
    <source>
        <strain>cv. Columbia</strain>
    </source>
</reference>
<reference key="4">
    <citation type="submission" date="2002-03" db="EMBL/GenBank/DDBJ databases">
        <title>Full-length cDNA from Arabidopsis thaliana.</title>
        <authorList>
            <person name="Brover V.V."/>
            <person name="Troukhan M.E."/>
            <person name="Alexandrov N.A."/>
            <person name="Lu Y.-P."/>
            <person name="Flavell R.B."/>
            <person name="Feldmann K.A."/>
        </authorList>
    </citation>
    <scope>NUCLEOTIDE SEQUENCE [LARGE SCALE MRNA]</scope>
</reference>
<reference key="5">
    <citation type="journal article" date="2012" name="Plant Cell Physiol.">
        <title>Functional characterization of CEBiP and CERK1 homologs in Arabidopsis and rice reveals the presence of different chitin receptor systems in plants.</title>
        <authorList>
            <person name="Shinya T."/>
            <person name="Motoyama N."/>
            <person name="Ikeda A."/>
            <person name="Wada M."/>
            <person name="Kamiya K."/>
            <person name="Hayafune M."/>
            <person name="Kaku H."/>
            <person name="Shibuya N."/>
        </authorList>
    </citation>
    <scope>FUNCTION</scope>
    <scope>INTERACTION WITH CHITIN</scope>
    <source>
        <strain>cv. Columbia</strain>
    </source>
</reference>
<feature type="signal peptide" evidence="3">
    <location>
        <begin position="1"/>
        <end position="23"/>
    </location>
</feature>
<feature type="chain" id="PRO_0000021629" description="LysM domain-containing GPI-anchored protein 2">
    <location>
        <begin position="24"/>
        <end position="318"/>
    </location>
</feature>
<feature type="propeptide" id="PRO_0000021630" description="Removed in mature form" evidence="3">
    <location>
        <begin position="319"/>
        <end position="350"/>
    </location>
</feature>
<feature type="domain" description="LysM 1" evidence="4">
    <location>
        <begin position="108"/>
        <end position="155"/>
    </location>
</feature>
<feature type="domain" description="LysM 2" evidence="4">
    <location>
        <begin position="172"/>
        <end position="216"/>
    </location>
</feature>
<feature type="binding site" evidence="1">
    <location>
        <begin position="114"/>
        <end position="120"/>
    </location>
    <ligand>
        <name>chitin</name>
        <dbReference type="ChEBI" id="CHEBI:17029"/>
    </ligand>
</feature>
<feature type="binding site" evidence="1">
    <location>
        <begin position="142"/>
        <end position="149"/>
    </location>
    <ligand>
        <name>chitin</name>
        <dbReference type="ChEBI" id="CHEBI:17029"/>
    </ligand>
</feature>
<feature type="lipid moiety-binding region" description="GPI-anchor amidated aspartate" evidence="3">
    <location>
        <position position="318"/>
    </location>
</feature>
<feature type="glycosylation site" description="N-linked (GlcNAc...) asparagine" evidence="3">
    <location>
        <position position="30"/>
    </location>
</feature>
<feature type="glycosylation site" description="N-linked (GlcNAc...) asparagine" evidence="3">
    <location>
        <position position="48"/>
    </location>
</feature>
<feature type="glycosylation site" description="N-linked (GlcNAc...) asparagine" evidence="3">
    <location>
        <position position="76"/>
    </location>
</feature>
<feature type="glycosylation site" description="N-linked (GlcNAc...) asparagine" evidence="3">
    <location>
        <position position="99"/>
    </location>
</feature>
<feature type="glycosylation site" description="N-linked (GlcNAc...) asparagine" evidence="3">
    <location>
        <position position="193"/>
    </location>
</feature>
<feature type="glycosylation site" description="N-linked (GlcNAc...) asparagine" evidence="3">
    <location>
        <position position="238"/>
    </location>
</feature>
<feature type="glycosylation site" description="N-linked (GlcNAc...) asparagine" evidence="3">
    <location>
        <position position="258"/>
    </location>
</feature>
<feature type="glycosylation site" description="N-linked (GlcNAc...) asparagine" evidence="3">
    <location>
        <position position="289"/>
    </location>
</feature>
<feature type="glycosylation site" description="N-linked (GlcNAc...) asparagine" evidence="3">
    <location>
        <position position="305"/>
    </location>
</feature>
<feature type="disulfide bond" evidence="2">
    <location>
        <begin position="31"/>
        <end position="97"/>
    </location>
</feature>
<feature type="disulfide bond" evidence="2">
    <location>
        <begin position="38"/>
        <end position="161"/>
    </location>
</feature>
<feature type="disulfide bond" evidence="2">
    <location>
        <begin position="95"/>
        <end position="159"/>
    </location>
</feature>
<feature type="disulfide bond" evidence="2">
    <location>
        <begin position="97"/>
        <end position="161"/>
    </location>
</feature>
<feature type="disulfide bond" evidence="2">
    <location>
        <begin position="221"/>
        <end position="253"/>
    </location>
</feature>
<feature type="disulfide bond" evidence="2">
    <location>
        <begin position="248"/>
        <end position="277"/>
    </location>
</feature>
<feature type="sequence conflict" description="In Ref. 4; AAM65912." evidence="6" ref="4">
    <original>K</original>
    <variation>N</variation>
    <location>
        <position position="227"/>
    </location>
</feature>
<feature type="sequence conflict" description="In Ref. 4; AAM65912." evidence="6" ref="4">
    <original>G</original>
    <variation>R</variation>
    <location>
        <position position="285"/>
    </location>
</feature>
<feature type="sequence conflict" description="In Ref. 4; AAM65912." evidence="6" ref="4">
    <original>Q</original>
    <variation>R</variation>
    <location>
        <position position="294"/>
    </location>
</feature>
<feature type="sequence conflict" description="In Ref. 4; AAM65912." evidence="6" ref="4">
    <original>D</original>
    <variation>G</variation>
    <location>
        <position position="323"/>
    </location>
</feature>
<feature type="sequence conflict" description="In Ref. 4; AAM65912." evidence="6" ref="4">
    <original>N</original>
    <variation>S</variation>
    <location>
        <position position="334"/>
    </location>
</feature>
<protein>
    <recommendedName>
        <fullName>LysM domain-containing GPI-anchored protein 2</fullName>
    </recommendedName>
    <alternativeName>
        <fullName>Chitin elicitor-binding protein LYM2</fullName>
        <shortName>CEBiP LYM2</shortName>
    </alternativeName>
</protein>
<organism>
    <name type="scientific">Arabidopsis thaliana</name>
    <name type="common">Mouse-ear cress</name>
    <dbReference type="NCBI Taxonomy" id="3702"/>
    <lineage>
        <taxon>Eukaryota</taxon>
        <taxon>Viridiplantae</taxon>
        <taxon>Streptophyta</taxon>
        <taxon>Embryophyta</taxon>
        <taxon>Tracheophyta</taxon>
        <taxon>Spermatophyta</taxon>
        <taxon>Magnoliopsida</taxon>
        <taxon>eudicotyledons</taxon>
        <taxon>Gunneridae</taxon>
        <taxon>Pentapetalae</taxon>
        <taxon>rosids</taxon>
        <taxon>malvids</taxon>
        <taxon>Brassicales</taxon>
        <taxon>Brassicaceae</taxon>
        <taxon>Camelineae</taxon>
        <taxon>Arabidopsis</taxon>
    </lineage>
</organism>
<keyword id="KW-1003">Cell membrane</keyword>
<keyword id="KW-0147">Chitin-binding</keyword>
<keyword id="KW-1015">Disulfide bond</keyword>
<keyword id="KW-0325">Glycoprotein</keyword>
<keyword id="KW-0336">GPI-anchor</keyword>
<keyword id="KW-0449">Lipoprotein</keyword>
<keyword id="KW-0472">Membrane</keyword>
<keyword id="KW-0611">Plant defense</keyword>
<keyword id="KW-1185">Reference proteome</keyword>
<keyword id="KW-0677">Repeat</keyword>
<keyword id="KW-0732">Signal</keyword>
<comment type="function">
    <text evidence="5">Chitin elicitor-binding protein involved in the perception of chitin oligosaccharide elicitor.</text>
</comment>
<comment type="subunit">
    <text evidence="1 5">Forms homooligomers. Interacts with CERK1 (By similarity). Binds to chitin oligosaccharide elicitor.</text>
</comment>
<comment type="subcellular location">
    <subcellularLocation>
        <location>Cell membrane</location>
        <topology>Lipid-anchor</topology>
        <topology>GPI-anchor</topology>
    </subcellularLocation>
</comment>